<dbReference type="EC" id="5.6.2.2" evidence="1"/>
<dbReference type="EMBL" id="AE004437">
    <property type="protein sequence ID" value="AAG19327.1"/>
    <property type="molecule type" value="Genomic_DNA"/>
</dbReference>
<dbReference type="PIR" id="C84245">
    <property type="entry name" value="C84245"/>
</dbReference>
<dbReference type="RefSeq" id="WP_010902623.1">
    <property type="nucleotide sequence ID" value="NC_002607.1"/>
</dbReference>
<dbReference type="SMR" id="Q9HR31"/>
<dbReference type="FunCoup" id="Q9HR31">
    <property type="interactions" value="16"/>
</dbReference>
<dbReference type="STRING" id="64091.VNG_0885G"/>
<dbReference type="PaxDb" id="64091-VNG_0885G"/>
<dbReference type="KEGG" id="hal:VNG_0885G"/>
<dbReference type="PATRIC" id="fig|64091.14.peg.680"/>
<dbReference type="HOGENOM" id="CLU_006403_0_0_2"/>
<dbReference type="InParanoid" id="Q9HR31"/>
<dbReference type="OrthoDB" id="65493at2157"/>
<dbReference type="PhylomeDB" id="Q9HR31"/>
<dbReference type="Proteomes" id="UP000000554">
    <property type="component" value="Chromosome"/>
</dbReference>
<dbReference type="GO" id="GO:0005829">
    <property type="term" value="C:cytosol"/>
    <property type="evidence" value="ECO:0000318"/>
    <property type="project" value="GO_Central"/>
</dbReference>
<dbReference type="GO" id="GO:0015935">
    <property type="term" value="C:small ribosomal subunit"/>
    <property type="evidence" value="ECO:0000318"/>
    <property type="project" value="GO_Central"/>
</dbReference>
<dbReference type="GO" id="GO:0005524">
    <property type="term" value="F:ATP binding"/>
    <property type="evidence" value="ECO:0007669"/>
    <property type="project" value="UniProtKB-UniRule"/>
</dbReference>
<dbReference type="GO" id="GO:0003677">
    <property type="term" value="F:DNA binding"/>
    <property type="evidence" value="ECO:0007669"/>
    <property type="project" value="UniProtKB-UniRule"/>
</dbReference>
<dbReference type="GO" id="GO:0003918">
    <property type="term" value="F:DNA topoisomerase type II (double strand cut, ATP-hydrolyzing) activity"/>
    <property type="evidence" value="ECO:0007669"/>
    <property type="project" value="UniProtKB-UniRule"/>
</dbReference>
<dbReference type="GO" id="GO:0006265">
    <property type="term" value="P:DNA topological change"/>
    <property type="evidence" value="ECO:0007669"/>
    <property type="project" value="UniProtKB-UniRule"/>
</dbReference>
<dbReference type="CDD" id="cd16933">
    <property type="entry name" value="HATPase_TopVIB-like"/>
    <property type="match status" value="1"/>
</dbReference>
<dbReference type="CDD" id="cd00823">
    <property type="entry name" value="TopoIIB_Trans"/>
    <property type="match status" value="1"/>
</dbReference>
<dbReference type="FunFam" id="3.30.565.10:FF:000062">
    <property type="entry name" value="Type 2 DNA topoisomerase 6 subunit B"/>
    <property type="match status" value="1"/>
</dbReference>
<dbReference type="Gene3D" id="1.10.8.50">
    <property type="match status" value="1"/>
</dbReference>
<dbReference type="Gene3D" id="2.60.40.2960">
    <property type="match status" value="1"/>
</dbReference>
<dbReference type="Gene3D" id="3.30.230.10">
    <property type="match status" value="1"/>
</dbReference>
<dbReference type="Gene3D" id="6.10.20.80">
    <property type="match status" value="1"/>
</dbReference>
<dbReference type="Gene3D" id="3.30.565.10">
    <property type="entry name" value="Histidine kinase-like ATPase, C-terminal domain"/>
    <property type="match status" value="1"/>
</dbReference>
<dbReference type="HAMAP" id="MF_00322">
    <property type="entry name" value="Top6B"/>
    <property type="match status" value="1"/>
</dbReference>
<dbReference type="InterPro" id="IPR036890">
    <property type="entry name" value="HATPase_C_sf"/>
</dbReference>
<dbReference type="InterPro" id="IPR020568">
    <property type="entry name" value="Ribosomal_Su5_D2-typ_SF"/>
</dbReference>
<dbReference type="InterPro" id="IPR014721">
    <property type="entry name" value="Ribsml_uS5_D2-typ_fold_subgr"/>
</dbReference>
<dbReference type="InterPro" id="IPR040494">
    <property type="entry name" value="Top6b_C"/>
</dbReference>
<dbReference type="InterPro" id="IPR005734">
    <property type="entry name" value="TopoVI_B"/>
</dbReference>
<dbReference type="InterPro" id="IPR015320">
    <property type="entry name" value="TopoVI_B_transducer"/>
</dbReference>
<dbReference type="NCBIfam" id="NF003218">
    <property type="entry name" value="PRK04184.1"/>
    <property type="match status" value="1"/>
</dbReference>
<dbReference type="NCBIfam" id="NF011439">
    <property type="entry name" value="PRK14868.1"/>
    <property type="match status" value="1"/>
</dbReference>
<dbReference type="NCBIfam" id="TIGR01052">
    <property type="entry name" value="top6b"/>
    <property type="match status" value="1"/>
</dbReference>
<dbReference type="PANTHER" id="PTHR48444">
    <property type="entry name" value="DNA TOPOISOMERASE 6 SUBUNIT B"/>
    <property type="match status" value="1"/>
</dbReference>
<dbReference type="PANTHER" id="PTHR48444:SF1">
    <property type="entry name" value="DNA TOPOISOMERASE 6 SUBUNIT B"/>
    <property type="match status" value="1"/>
</dbReference>
<dbReference type="Pfam" id="PF02518">
    <property type="entry name" value="HATPase_c"/>
    <property type="match status" value="1"/>
</dbReference>
<dbReference type="Pfam" id="PF18000">
    <property type="entry name" value="Top6b_C"/>
    <property type="match status" value="1"/>
</dbReference>
<dbReference type="Pfam" id="PF09239">
    <property type="entry name" value="Topo-VIb_trans"/>
    <property type="match status" value="1"/>
</dbReference>
<dbReference type="SMART" id="SM00387">
    <property type="entry name" value="HATPase_c"/>
    <property type="match status" value="1"/>
</dbReference>
<dbReference type="SUPFAM" id="SSF55874">
    <property type="entry name" value="ATPase domain of HSP90 chaperone/DNA topoisomerase II/histidine kinase"/>
    <property type="match status" value="1"/>
</dbReference>
<dbReference type="SUPFAM" id="SSF54211">
    <property type="entry name" value="Ribosomal protein S5 domain 2-like"/>
    <property type="match status" value="1"/>
</dbReference>
<accession>Q9HR31</accession>
<sequence>MTSFQSTLDDDEDGIAEELAASQREISVAEFFEKNKHMLGFDSGARGLVTAVKEAVDNALDATEEAGILPDIYVEISEGRDYYTLIVEDNGPGITNAQIPKIFGKLLYGSRFHAREQSRGQQGIGISAAVLYSQLTSGKPVRIESRTQDSETANVYELIIDTDTNEPEISAETEVSAAKSDLRGTHGTRIEMALDANMRARGQLHDYIKHTAVVNPHARIELQEPGGELKSERAEEASLPAETDEILPHPHGVELGTLIKMLAETDSHSVSGFLQSEFTRVGSKTATGIIDAFRDEHFGREMRWRPPADADLEATVADAVANKDATHTAVFARTVADAVRDADSIAPAELGALVADAAADAQDDTGTSFGETVQANVVAAVRDALTSDRVADVLGPVDEATTVQKDDATVRGLAERIAAKFESGGDTDRVTRDTLDEYVFRAAENTAEYADATIGETARENVADALWARMATVPDDPPNTSALADDRDAASDLLAAMASVNVMAPPTSCLSPIEADQLEAGLRTEFDADFYAAATRDADVHGGDPFIVEAGIAYGGDIDSEGGVQLMRFANRVPLVYQRGACATTDVLGDIGWRNYNLSQPGGSGLPQGPAVIMVHVASTNVPFTSESKDAIANVPEIEAEIELAVREAARELKSFLQKRQSMRKRQQKQDVIMDILPTMAEKVGELTGRGGVDVSDSLARIMNNVLVERARSDDGQTVTLRVENHGTGSVDVDVTDIVSAEPDGVGDDASVVAMDDEYFVKWTPAVAGDDAAELTYSVDADADCELSVSGVADARLTVSEADT</sequence>
<gene>
    <name evidence="1" type="primary">top6B</name>
    <name type="ordered locus">VNG_0885G</name>
</gene>
<name>TOP6B_HALSA</name>
<organism>
    <name type="scientific">Halobacterium salinarum (strain ATCC 700922 / JCM 11081 / NRC-1)</name>
    <name type="common">Halobacterium halobium</name>
    <dbReference type="NCBI Taxonomy" id="64091"/>
    <lineage>
        <taxon>Archaea</taxon>
        <taxon>Methanobacteriati</taxon>
        <taxon>Methanobacteriota</taxon>
        <taxon>Stenosarchaea group</taxon>
        <taxon>Halobacteria</taxon>
        <taxon>Halobacteriales</taxon>
        <taxon>Halobacteriaceae</taxon>
        <taxon>Halobacterium</taxon>
        <taxon>Halobacterium salinarum NRC-34001</taxon>
    </lineage>
</organism>
<protein>
    <recommendedName>
        <fullName evidence="1">Type 2 DNA topoisomerase 6 subunit B</fullName>
        <ecNumber evidence="1">5.6.2.2</ecNumber>
    </recommendedName>
    <alternativeName>
        <fullName evidence="1">Type II DNA topoisomerase VI subunit B</fullName>
        <shortName evidence="1">TopoVI-B</shortName>
    </alternativeName>
</protein>
<proteinExistence type="inferred from homology"/>
<comment type="function">
    <text evidence="1">Relaxes both positive and negative superturns and exhibits a strong decatenase activity.</text>
</comment>
<comment type="catalytic activity">
    <reaction evidence="1">
        <text>ATP-dependent breakage, passage and rejoining of double-stranded DNA.</text>
        <dbReference type="EC" id="5.6.2.2"/>
    </reaction>
</comment>
<comment type="subunit">
    <text evidence="1">Homodimer. Heterotetramer of two Top6A and two Top6B chains.</text>
</comment>
<comment type="similarity">
    <text evidence="1">Belongs to the TOP6B family.</text>
</comment>
<evidence type="ECO:0000255" key="1">
    <source>
        <dbReference type="HAMAP-Rule" id="MF_00322"/>
    </source>
</evidence>
<reference key="1">
    <citation type="journal article" date="2000" name="Proc. Natl. Acad. Sci. U.S.A.">
        <title>Genome sequence of Halobacterium species NRC-1.</title>
        <authorList>
            <person name="Ng W.V."/>
            <person name="Kennedy S.P."/>
            <person name="Mahairas G.G."/>
            <person name="Berquist B."/>
            <person name="Pan M."/>
            <person name="Shukla H.D."/>
            <person name="Lasky S.R."/>
            <person name="Baliga N.S."/>
            <person name="Thorsson V."/>
            <person name="Sbrogna J."/>
            <person name="Swartzell S."/>
            <person name="Weir D."/>
            <person name="Hall J."/>
            <person name="Dahl T.A."/>
            <person name="Welti R."/>
            <person name="Goo Y.A."/>
            <person name="Leithauser B."/>
            <person name="Keller K."/>
            <person name="Cruz R."/>
            <person name="Danson M.J."/>
            <person name="Hough D.W."/>
            <person name="Maddocks D.G."/>
            <person name="Jablonski P.E."/>
            <person name="Krebs M.P."/>
            <person name="Angevine C.M."/>
            <person name="Dale H."/>
            <person name="Isenbarger T.A."/>
            <person name="Peck R.F."/>
            <person name="Pohlschroder M."/>
            <person name="Spudich J.L."/>
            <person name="Jung K.-H."/>
            <person name="Alam M."/>
            <person name="Freitas T."/>
            <person name="Hou S."/>
            <person name="Daniels C.J."/>
            <person name="Dennis P.P."/>
            <person name="Omer A.D."/>
            <person name="Ebhardt H."/>
            <person name="Lowe T.M."/>
            <person name="Liang P."/>
            <person name="Riley M."/>
            <person name="Hood L."/>
            <person name="DasSarma S."/>
        </authorList>
    </citation>
    <scope>NUCLEOTIDE SEQUENCE [LARGE SCALE GENOMIC DNA]</scope>
    <source>
        <strain>ATCC 700922 / JCM 11081 / NRC-1</strain>
    </source>
</reference>
<keyword id="KW-0067">ATP-binding</keyword>
<keyword id="KW-0238">DNA-binding</keyword>
<keyword id="KW-0413">Isomerase</keyword>
<keyword id="KW-0547">Nucleotide-binding</keyword>
<keyword id="KW-1185">Reference proteome</keyword>
<keyword id="KW-0799">Topoisomerase</keyword>
<feature type="chain" id="PRO_0000145460" description="Type 2 DNA topoisomerase 6 subunit B">
    <location>
        <begin position="1"/>
        <end position="804"/>
    </location>
</feature>
<feature type="binding site" evidence="1">
    <location>
        <position position="58"/>
    </location>
    <ligand>
        <name>ATP</name>
        <dbReference type="ChEBI" id="CHEBI:30616"/>
    </ligand>
</feature>
<feature type="binding site" evidence="1">
    <location>
        <position position="89"/>
    </location>
    <ligand>
        <name>ATP</name>
        <dbReference type="ChEBI" id="CHEBI:30616"/>
    </ligand>
</feature>
<feature type="binding site" evidence="1">
    <location>
        <begin position="110"/>
        <end position="111"/>
    </location>
    <ligand>
        <name>ATP</name>
        <dbReference type="ChEBI" id="CHEBI:30616"/>
    </ligand>
</feature>
<feature type="binding site" evidence="1">
    <location>
        <begin position="120"/>
        <end position="127"/>
    </location>
    <ligand>
        <name>ATP</name>
        <dbReference type="ChEBI" id="CHEBI:30616"/>
    </ligand>
</feature>
<feature type="binding site" evidence="1">
    <location>
        <position position="629"/>
    </location>
    <ligand>
        <name>ATP</name>
        <dbReference type="ChEBI" id="CHEBI:30616"/>
    </ligand>
</feature>